<proteinExistence type="inferred from homology"/>
<organism>
    <name type="scientific">Zymomonas mobilis subsp. mobilis (strain ATCC 31821 / ZM4 / CP4)</name>
    <dbReference type="NCBI Taxonomy" id="264203"/>
    <lineage>
        <taxon>Bacteria</taxon>
        <taxon>Pseudomonadati</taxon>
        <taxon>Pseudomonadota</taxon>
        <taxon>Alphaproteobacteria</taxon>
        <taxon>Sphingomonadales</taxon>
        <taxon>Zymomonadaceae</taxon>
        <taxon>Zymomonas</taxon>
    </lineage>
</organism>
<protein>
    <recommendedName>
        <fullName evidence="1">Ribosome maturation factor RimP</fullName>
    </recommendedName>
</protein>
<evidence type="ECO:0000255" key="1">
    <source>
        <dbReference type="HAMAP-Rule" id="MF_01077"/>
    </source>
</evidence>
<accession>Q5NQ24</accession>
<name>RIMP_ZYMMO</name>
<comment type="function">
    <text evidence="1">Required for maturation of 30S ribosomal subunits.</text>
</comment>
<comment type="subcellular location">
    <subcellularLocation>
        <location evidence="1">Cytoplasm</location>
    </subcellularLocation>
</comment>
<comment type="similarity">
    <text evidence="1">Belongs to the RimP family.</text>
</comment>
<feature type="chain" id="PRO_0000229297" description="Ribosome maturation factor RimP">
    <location>
        <begin position="1"/>
        <end position="184"/>
    </location>
</feature>
<keyword id="KW-0963">Cytoplasm</keyword>
<keyword id="KW-1185">Reference proteome</keyword>
<keyword id="KW-0690">Ribosome biogenesis</keyword>
<dbReference type="EMBL" id="AE008692">
    <property type="protein sequence ID" value="AAV89181.1"/>
    <property type="molecule type" value="Genomic_DNA"/>
</dbReference>
<dbReference type="RefSeq" id="WP_011240463.1">
    <property type="nucleotide sequence ID" value="NZ_CP035711.1"/>
</dbReference>
<dbReference type="SMR" id="Q5NQ24"/>
<dbReference type="STRING" id="264203.ZMO0557"/>
<dbReference type="GeneID" id="79904251"/>
<dbReference type="KEGG" id="zmo:ZMO0557"/>
<dbReference type="eggNOG" id="COG0779">
    <property type="taxonomic scope" value="Bacteria"/>
</dbReference>
<dbReference type="HOGENOM" id="CLU_070525_0_1_5"/>
<dbReference type="Proteomes" id="UP000001173">
    <property type="component" value="Chromosome"/>
</dbReference>
<dbReference type="GO" id="GO:0005829">
    <property type="term" value="C:cytosol"/>
    <property type="evidence" value="ECO:0007669"/>
    <property type="project" value="TreeGrafter"/>
</dbReference>
<dbReference type="GO" id="GO:0000028">
    <property type="term" value="P:ribosomal small subunit assembly"/>
    <property type="evidence" value="ECO:0007669"/>
    <property type="project" value="TreeGrafter"/>
</dbReference>
<dbReference type="GO" id="GO:0006412">
    <property type="term" value="P:translation"/>
    <property type="evidence" value="ECO:0007669"/>
    <property type="project" value="TreeGrafter"/>
</dbReference>
<dbReference type="CDD" id="cd01734">
    <property type="entry name" value="YlxS_C"/>
    <property type="match status" value="1"/>
</dbReference>
<dbReference type="Gene3D" id="3.30.300.70">
    <property type="entry name" value="RimP-like superfamily, N-terminal"/>
    <property type="match status" value="1"/>
</dbReference>
<dbReference type="HAMAP" id="MF_01077">
    <property type="entry name" value="RimP"/>
    <property type="match status" value="1"/>
</dbReference>
<dbReference type="InterPro" id="IPR003728">
    <property type="entry name" value="Ribosome_maturation_RimP"/>
</dbReference>
<dbReference type="InterPro" id="IPR028998">
    <property type="entry name" value="RimP_C"/>
</dbReference>
<dbReference type="InterPro" id="IPR036847">
    <property type="entry name" value="RimP_C_sf"/>
</dbReference>
<dbReference type="InterPro" id="IPR028989">
    <property type="entry name" value="RimP_N"/>
</dbReference>
<dbReference type="InterPro" id="IPR035956">
    <property type="entry name" value="RimP_N_sf"/>
</dbReference>
<dbReference type="NCBIfam" id="NF011229">
    <property type="entry name" value="PRK14636.1"/>
    <property type="match status" value="1"/>
</dbReference>
<dbReference type="PANTHER" id="PTHR33867">
    <property type="entry name" value="RIBOSOME MATURATION FACTOR RIMP"/>
    <property type="match status" value="1"/>
</dbReference>
<dbReference type="PANTHER" id="PTHR33867:SF1">
    <property type="entry name" value="RIBOSOME MATURATION FACTOR RIMP"/>
    <property type="match status" value="1"/>
</dbReference>
<dbReference type="Pfam" id="PF17384">
    <property type="entry name" value="DUF150_C"/>
    <property type="match status" value="1"/>
</dbReference>
<dbReference type="Pfam" id="PF02576">
    <property type="entry name" value="RimP_N"/>
    <property type="match status" value="1"/>
</dbReference>
<dbReference type="SUPFAM" id="SSF74942">
    <property type="entry name" value="YhbC-like, C-terminal domain"/>
    <property type="match status" value="1"/>
</dbReference>
<dbReference type="SUPFAM" id="SSF75420">
    <property type="entry name" value="YhbC-like, N-terminal domain"/>
    <property type="match status" value="1"/>
</dbReference>
<sequence>MTDTAPKAPVVDIPAITALVEPEVKALGLELVRIAMFGGKSDPTLQIMAERPDTRQIGLTECEALSRRLSEIFDEQDPIEDAYRLEVSSPGIDRPLTRRKDYQDWKGFSARIRLSAPLDGRKQFDGEIIGIDDADNVILDCPKVGQKILPFSAIERSKLLLTDALIAATQPLDSEGADQIVREG</sequence>
<reference key="1">
    <citation type="journal article" date="2005" name="Nat. Biotechnol.">
        <title>The genome sequence of the ethanologenic bacterium Zymomonas mobilis ZM4.</title>
        <authorList>
            <person name="Seo J.-S."/>
            <person name="Chong H."/>
            <person name="Park H.S."/>
            <person name="Yoon K.-O."/>
            <person name="Jung C."/>
            <person name="Kim J.J."/>
            <person name="Hong J.H."/>
            <person name="Kim H."/>
            <person name="Kim J.-H."/>
            <person name="Kil J.-I."/>
            <person name="Park C.J."/>
            <person name="Oh H.-M."/>
            <person name="Lee J.-S."/>
            <person name="Jin S.-J."/>
            <person name="Um H.-W."/>
            <person name="Lee H.-J."/>
            <person name="Oh S.-J."/>
            <person name="Kim J.Y."/>
            <person name="Kang H.L."/>
            <person name="Lee S.Y."/>
            <person name="Lee K.J."/>
            <person name="Kang H.S."/>
        </authorList>
    </citation>
    <scope>NUCLEOTIDE SEQUENCE [LARGE SCALE GENOMIC DNA]</scope>
    <source>
        <strain>ATCC 31821 / ZM4 / CP4</strain>
    </source>
</reference>
<gene>
    <name evidence="1" type="primary">rimP</name>
    <name type="ordered locus">ZMO0557</name>
</gene>